<organism>
    <name type="scientific">Dictyostelium discoideum</name>
    <name type="common">Social amoeba</name>
    <dbReference type="NCBI Taxonomy" id="44689"/>
    <lineage>
        <taxon>Eukaryota</taxon>
        <taxon>Amoebozoa</taxon>
        <taxon>Evosea</taxon>
        <taxon>Eumycetozoa</taxon>
        <taxon>Dictyostelia</taxon>
        <taxon>Dictyosteliales</taxon>
        <taxon>Dictyosteliaceae</taxon>
        <taxon>Dictyostelium</taxon>
    </lineage>
</organism>
<protein>
    <recommendedName>
        <fullName>GATA zinc finger domain-containing protein 18</fullName>
    </recommendedName>
</protein>
<gene>
    <name type="primary">gtaR</name>
    <name type="ORF">DDB_G0279331</name>
</gene>
<sequence>MAHNNNNNINNNNNNNNNNNNNNNKNNNSEYKTNRNLLYKTILNDIENSLQSLIKPQELTNLLEDNINKLKELDGVQPTNTFGNLQNTSTNTTTTTTTTTTTTTTSSPNNNVITPNSNLKQTLSPSVLIEHLNLFGNENFEEGDDEEETSSDSDSSSSSSTSSSSSERVPSKKLKPMAKPRPGGCSICKTQETPYWRKGKDGDKTVYLCNACGLQIYKKKKKEKLSKEKHSIKNVLN</sequence>
<accession>Q54WY0</accession>
<feature type="chain" id="PRO_0000330451" description="GATA zinc finger domain-containing protein 18">
    <location>
        <begin position="1"/>
        <end position="237"/>
    </location>
</feature>
<feature type="zinc finger region" description="GATA-type" evidence="1">
    <location>
        <begin position="185"/>
        <end position="212"/>
    </location>
</feature>
<feature type="region of interest" description="Disordered" evidence="2">
    <location>
        <begin position="1"/>
        <end position="31"/>
    </location>
</feature>
<feature type="region of interest" description="Disordered" evidence="2">
    <location>
        <begin position="78"/>
        <end position="119"/>
    </location>
</feature>
<feature type="region of interest" description="Disordered" evidence="2">
    <location>
        <begin position="140"/>
        <end position="186"/>
    </location>
</feature>
<feature type="compositionally biased region" description="Low complexity" evidence="2">
    <location>
        <begin position="1"/>
        <end position="28"/>
    </location>
</feature>
<feature type="compositionally biased region" description="Low complexity" evidence="2">
    <location>
        <begin position="87"/>
        <end position="118"/>
    </location>
</feature>
<feature type="compositionally biased region" description="Acidic residues" evidence="2">
    <location>
        <begin position="140"/>
        <end position="151"/>
    </location>
</feature>
<feature type="compositionally biased region" description="Low complexity" evidence="2">
    <location>
        <begin position="152"/>
        <end position="167"/>
    </location>
</feature>
<name>GTAR_DICDI</name>
<evidence type="ECO:0000255" key="1">
    <source>
        <dbReference type="PROSITE-ProRule" id="PRU00094"/>
    </source>
</evidence>
<evidence type="ECO:0000256" key="2">
    <source>
        <dbReference type="SAM" id="MobiDB-lite"/>
    </source>
</evidence>
<proteinExistence type="predicted"/>
<reference key="1">
    <citation type="journal article" date="2005" name="Nature">
        <title>The genome of the social amoeba Dictyostelium discoideum.</title>
        <authorList>
            <person name="Eichinger L."/>
            <person name="Pachebat J.A."/>
            <person name="Gloeckner G."/>
            <person name="Rajandream M.A."/>
            <person name="Sucgang R."/>
            <person name="Berriman M."/>
            <person name="Song J."/>
            <person name="Olsen R."/>
            <person name="Szafranski K."/>
            <person name="Xu Q."/>
            <person name="Tunggal B."/>
            <person name="Kummerfeld S."/>
            <person name="Madera M."/>
            <person name="Konfortov B.A."/>
            <person name="Rivero F."/>
            <person name="Bankier A.T."/>
            <person name="Lehmann R."/>
            <person name="Hamlin N."/>
            <person name="Davies R."/>
            <person name="Gaudet P."/>
            <person name="Fey P."/>
            <person name="Pilcher K."/>
            <person name="Chen G."/>
            <person name="Saunders D."/>
            <person name="Sodergren E.J."/>
            <person name="Davis P."/>
            <person name="Kerhornou A."/>
            <person name="Nie X."/>
            <person name="Hall N."/>
            <person name="Anjard C."/>
            <person name="Hemphill L."/>
            <person name="Bason N."/>
            <person name="Farbrother P."/>
            <person name="Desany B."/>
            <person name="Just E."/>
            <person name="Morio T."/>
            <person name="Rost R."/>
            <person name="Churcher C.M."/>
            <person name="Cooper J."/>
            <person name="Haydock S."/>
            <person name="van Driessche N."/>
            <person name="Cronin A."/>
            <person name="Goodhead I."/>
            <person name="Muzny D.M."/>
            <person name="Mourier T."/>
            <person name="Pain A."/>
            <person name="Lu M."/>
            <person name="Harper D."/>
            <person name="Lindsay R."/>
            <person name="Hauser H."/>
            <person name="James K.D."/>
            <person name="Quiles M."/>
            <person name="Madan Babu M."/>
            <person name="Saito T."/>
            <person name="Buchrieser C."/>
            <person name="Wardroper A."/>
            <person name="Felder M."/>
            <person name="Thangavelu M."/>
            <person name="Johnson D."/>
            <person name="Knights A."/>
            <person name="Loulseged H."/>
            <person name="Mungall K.L."/>
            <person name="Oliver K."/>
            <person name="Price C."/>
            <person name="Quail M.A."/>
            <person name="Urushihara H."/>
            <person name="Hernandez J."/>
            <person name="Rabbinowitsch E."/>
            <person name="Steffen D."/>
            <person name="Sanders M."/>
            <person name="Ma J."/>
            <person name="Kohara Y."/>
            <person name="Sharp S."/>
            <person name="Simmonds M.N."/>
            <person name="Spiegler S."/>
            <person name="Tivey A."/>
            <person name="Sugano S."/>
            <person name="White B."/>
            <person name="Walker D."/>
            <person name="Woodward J.R."/>
            <person name="Winckler T."/>
            <person name="Tanaka Y."/>
            <person name="Shaulsky G."/>
            <person name="Schleicher M."/>
            <person name="Weinstock G.M."/>
            <person name="Rosenthal A."/>
            <person name="Cox E.C."/>
            <person name="Chisholm R.L."/>
            <person name="Gibbs R.A."/>
            <person name="Loomis W.F."/>
            <person name="Platzer M."/>
            <person name="Kay R.R."/>
            <person name="Williams J.G."/>
            <person name="Dear P.H."/>
            <person name="Noegel A.A."/>
            <person name="Barrell B.G."/>
            <person name="Kuspa A."/>
        </authorList>
    </citation>
    <scope>NUCLEOTIDE SEQUENCE [LARGE SCALE GENOMIC DNA]</scope>
    <source>
        <strain>AX4</strain>
    </source>
</reference>
<dbReference type="EMBL" id="AAFI02000030">
    <property type="protein sequence ID" value="EAL67814.1"/>
    <property type="molecule type" value="Genomic_DNA"/>
</dbReference>
<dbReference type="RefSeq" id="XP_641797.1">
    <property type="nucleotide sequence ID" value="XM_636705.1"/>
</dbReference>
<dbReference type="SMR" id="Q54WY0"/>
<dbReference type="PaxDb" id="44689-DDB0220474"/>
<dbReference type="EnsemblProtists" id="EAL67814">
    <property type="protein sequence ID" value="EAL67814"/>
    <property type="gene ID" value="DDB_G0279331"/>
</dbReference>
<dbReference type="GeneID" id="8621994"/>
<dbReference type="KEGG" id="ddi:DDB_G0279331"/>
<dbReference type="dictyBase" id="DDB_G0279331">
    <property type="gene designation" value="gtaR"/>
</dbReference>
<dbReference type="VEuPathDB" id="AmoebaDB:DDB_G0279331"/>
<dbReference type="HOGENOM" id="CLU_1172509_0_0_1"/>
<dbReference type="InParanoid" id="Q54WY0"/>
<dbReference type="OMA" id="SCFICRI"/>
<dbReference type="PRO" id="PR:Q54WY0"/>
<dbReference type="Proteomes" id="UP000002195">
    <property type="component" value="Chromosome 3"/>
</dbReference>
<dbReference type="GO" id="GO:0043565">
    <property type="term" value="F:sequence-specific DNA binding"/>
    <property type="evidence" value="ECO:0007669"/>
    <property type="project" value="InterPro"/>
</dbReference>
<dbReference type="GO" id="GO:0008270">
    <property type="term" value="F:zinc ion binding"/>
    <property type="evidence" value="ECO:0007669"/>
    <property type="project" value="UniProtKB-KW"/>
</dbReference>
<dbReference type="GO" id="GO:0006355">
    <property type="term" value="P:regulation of DNA-templated transcription"/>
    <property type="evidence" value="ECO:0007669"/>
    <property type="project" value="InterPro"/>
</dbReference>
<dbReference type="CDD" id="cd00202">
    <property type="entry name" value="ZnF_GATA"/>
    <property type="match status" value="1"/>
</dbReference>
<dbReference type="Gene3D" id="3.30.50.10">
    <property type="entry name" value="Erythroid Transcription Factor GATA-1, subunit A"/>
    <property type="match status" value="1"/>
</dbReference>
<dbReference type="InterPro" id="IPR000679">
    <property type="entry name" value="Znf_GATA"/>
</dbReference>
<dbReference type="InterPro" id="IPR013088">
    <property type="entry name" value="Znf_NHR/GATA"/>
</dbReference>
<dbReference type="Pfam" id="PF00320">
    <property type="entry name" value="GATA"/>
    <property type="match status" value="1"/>
</dbReference>
<dbReference type="SMART" id="SM00401">
    <property type="entry name" value="ZnF_GATA"/>
    <property type="match status" value="1"/>
</dbReference>
<dbReference type="SUPFAM" id="SSF57716">
    <property type="entry name" value="Glucocorticoid receptor-like (DNA-binding domain)"/>
    <property type="match status" value="1"/>
</dbReference>
<dbReference type="PROSITE" id="PS00344">
    <property type="entry name" value="GATA_ZN_FINGER_1"/>
    <property type="match status" value="1"/>
</dbReference>
<dbReference type="PROSITE" id="PS50114">
    <property type="entry name" value="GATA_ZN_FINGER_2"/>
    <property type="match status" value="1"/>
</dbReference>
<keyword id="KW-0479">Metal-binding</keyword>
<keyword id="KW-1185">Reference proteome</keyword>
<keyword id="KW-0862">Zinc</keyword>
<keyword id="KW-0863">Zinc-finger</keyword>